<evidence type="ECO:0000255" key="1">
    <source>
        <dbReference type="HAMAP-Rule" id="MF_01147"/>
    </source>
</evidence>
<comment type="function">
    <text evidence="1">Catalyzes the transfer of the diacylglyceryl group from phosphatidylglycerol to the sulfhydryl group of the N-terminal cysteine of a prolipoprotein, the first step in the formation of mature lipoproteins.</text>
</comment>
<comment type="catalytic activity">
    <reaction evidence="1">
        <text>L-cysteinyl-[prolipoprotein] + a 1,2-diacyl-sn-glycero-3-phospho-(1'-sn-glycerol) = an S-1,2-diacyl-sn-glyceryl-L-cysteinyl-[prolipoprotein] + sn-glycerol 1-phosphate + H(+)</text>
        <dbReference type="Rhea" id="RHEA:56712"/>
        <dbReference type="Rhea" id="RHEA-COMP:14679"/>
        <dbReference type="Rhea" id="RHEA-COMP:14680"/>
        <dbReference type="ChEBI" id="CHEBI:15378"/>
        <dbReference type="ChEBI" id="CHEBI:29950"/>
        <dbReference type="ChEBI" id="CHEBI:57685"/>
        <dbReference type="ChEBI" id="CHEBI:64716"/>
        <dbReference type="ChEBI" id="CHEBI:140658"/>
        <dbReference type="EC" id="2.5.1.145"/>
    </reaction>
</comment>
<comment type="pathway">
    <text evidence="1">Protein modification; lipoprotein biosynthesis (diacylglyceryl transfer).</text>
</comment>
<comment type="subcellular location">
    <subcellularLocation>
        <location evidence="1">Cell membrane</location>
        <topology evidence="1">Multi-pass membrane protein</topology>
    </subcellularLocation>
</comment>
<comment type="similarity">
    <text evidence="1">Belongs to the Lgt family.</text>
</comment>
<gene>
    <name evidence="1" type="primary">lgt</name>
    <name type="ordered locus">MGAS10270_Spy0479</name>
</gene>
<protein>
    <recommendedName>
        <fullName evidence="1">Phosphatidylglycerol--prolipoprotein diacylglyceryl transferase</fullName>
        <ecNumber evidence="1">2.5.1.145</ecNumber>
    </recommendedName>
</protein>
<feature type="chain" id="PRO_1000053512" description="Phosphatidylglycerol--prolipoprotein diacylglyceryl transferase">
    <location>
        <begin position="1"/>
        <end position="259"/>
    </location>
</feature>
<feature type="transmembrane region" description="Helical" evidence="1">
    <location>
        <begin position="12"/>
        <end position="32"/>
    </location>
</feature>
<feature type="transmembrane region" description="Helical" evidence="1">
    <location>
        <begin position="41"/>
        <end position="61"/>
    </location>
</feature>
<feature type="transmembrane region" description="Helical" evidence="1">
    <location>
        <begin position="80"/>
        <end position="100"/>
    </location>
</feature>
<feature type="transmembrane region" description="Helical" evidence="1">
    <location>
        <begin position="109"/>
        <end position="129"/>
    </location>
</feature>
<feature type="transmembrane region" description="Helical" evidence="1">
    <location>
        <begin position="167"/>
        <end position="187"/>
    </location>
</feature>
<feature type="transmembrane region" description="Helical" evidence="1">
    <location>
        <begin position="194"/>
        <end position="214"/>
    </location>
</feature>
<feature type="transmembrane region" description="Helical" evidence="1">
    <location>
        <begin position="226"/>
        <end position="246"/>
    </location>
</feature>
<feature type="binding site" evidence="1">
    <location>
        <position position="131"/>
    </location>
    <ligand>
        <name>a 1,2-diacyl-sn-glycero-3-phospho-(1'-sn-glycerol)</name>
        <dbReference type="ChEBI" id="CHEBI:64716"/>
    </ligand>
</feature>
<accession>Q1JHX9</accession>
<keyword id="KW-1003">Cell membrane</keyword>
<keyword id="KW-0472">Membrane</keyword>
<keyword id="KW-0808">Transferase</keyword>
<keyword id="KW-0812">Transmembrane</keyword>
<keyword id="KW-1133">Transmembrane helix</keyword>
<organism>
    <name type="scientific">Streptococcus pyogenes serotype M2 (strain MGAS10270)</name>
    <dbReference type="NCBI Taxonomy" id="370552"/>
    <lineage>
        <taxon>Bacteria</taxon>
        <taxon>Bacillati</taxon>
        <taxon>Bacillota</taxon>
        <taxon>Bacilli</taxon>
        <taxon>Lactobacillales</taxon>
        <taxon>Streptococcaceae</taxon>
        <taxon>Streptococcus</taxon>
    </lineage>
</organism>
<proteinExistence type="inferred from homology"/>
<dbReference type="EC" id="2.5.1.145" evidence="1"/>
<dbReference type="EMBL" id="CP000260">
    <property type="protein sequence ID" value="ABF33544.1"/>
    <property type="molecule type" value="Genomic_DNA"/>
</dbReference>
<dbReference type="RefSeq" id="WP_002990577.1">
    <property type="nucleotide sequence ID" value="NZ_CVUH01000002.1"/>
</dbReference>
<dbReference type="SMR" id="Q1JHX9"/>
<dbReference type="GeneID" id="69901201"/>
<dbReference type="KEGG" id="sph:MGAS10270_Spy0479"/>
<dbReference type="HOGENOM" id="CLU_013386_0_1_9"/>
<dbReference type="UniPathway" id="UPA00664"/>
<dbReference type="Proteomes" id="UP000002436">
    <property type="component" value="Chromosome"/>
</dbReference>
<dbReference type="GO" id="GO:0005886">
    <property type="term" value="C:plasma membrane"/>
    <property type="evidence" value="ECO:0007669"/>
    <property type="project" value="UniProtKB-SubCell"/>
</dbReference>
<dbReference type="GO" id="GO:0008961">
    <property type="term" value="F:phosphatidylglycerol-prolipoprotein diacylglyceryl transferase activity"/>
    <property type="evidence" value="ECO:0007669"/>
    <property type="project" value="UniProtKB-UniRule"/>
</dbReference>
<dbReference type="GO" id="GO:0042158">
    <property type="term" value="P:lipoprotein biosynthetic process"/>
    <property type="evidence" value="ECO:0007669"/>
    <property type="project" value="UniProtKB-UniRule"/>
</dbReference>
<dbReference type="HAMAP" id="MF_01147">
    <property type="entry name" value="Lgt"/>
    <property type="match status" value="1"/>
</dbReference>
<dbReference type="InterPro" id="IPR001640">
    <property type="entry name" value="Lgt"/>
</dbReference>
<dbReference type="NCBIfam" id="TIGR00544">
    <property type="entry name" value="lgt"/>
    <property type="match status" value="1"/>
</dbReference>
<dbReference type="PANTHER" id="PTHR30589:SF0">
    <property type="entry name" value="PHOSPHATIDYLGLYCEROL--PROLIPOPROTEIN DIACYLGLYCERYL TRANSFERASE"/>
    <property type="match status" value="1"/>
</dbReference>
<dbReference type="PANTHER" id="PTHR30589">
    <property type="entry name" value="PROLIPOPROTEIN DIACYLGLYCERYL TRANSFERASE"/>
    <property type="match status" value="1"/>
</dbReference>
<dbReference type="Pfam" id="PF01790">
    <property type="entry name" value="LGT"/>
    <property type="match status" value="1"/>
</dbReference>
<dbReference type="PROSITE" id="PS01311">
    <property type="entry name" value="LGT"/>
    <property type="match status" value="1"/>
</dbReference>
<name>LGT_STRPD</name>
<sequence>MINPIALKCGPLAIHWYALCILSGLVLAVYLASKEAPKKGISSDAIFDFILIAFPLAIVGARIYYVIFEWSYYVKHLDEIIAIWNGGIAIYGGLITGALVLLAYCYNKVLNPIHFLDIAAPSVMVAQAIGRWGNFINQEAYGKAVSQLNYLPSFIQKQMFIEGSYRIPTFLYESLWNLLGFVIIMMWRRKPKSLLDGEIFAFYLIWYGSGRLVIEGMRTDSLMFLGIRISQYVSALLIIIGLIFVIKRRRQKGISYYQE</sequence>
<reference key="1">
    <citation type="journal article" date="2006" name="Proc. Natl. Acad. Sci. U.S.A.">
        <title>Molecular genetic anatomy of inter- and intraserotype variation in the human bacterial pathogen group A Streptococcus.</title>
        <authorList>
            <person name="Beres S.B."/>
            <person name="Richter E.W."/>
            <person name="Nagiec M.J."/>
            <person name="Sumby P."/>
            <person name="Porcella S.F."/>
            <person name="DeLeo F.R."/>
            <person name="Musser J.M."/>
        </authorList>
    </citation>
    <scope>NUCLEOTIDE SEQUENCE [LARGE SCALE GENOMIC DNA]</scope>
    <source>
        <strain>MGAS10270</strain>
    </source>
</reference>